<evidence type="ECO:0000255" key="1"/>
<evidence type="ECO:0000256" key="2">
    <source>
        <dbReference type="SAM" id="MobiDB-lite"/>
    </source>
</evidence>
<evidence type="ECO:0000269" key="3">
    <source>
    </source>
</evidence>
<evidence type="ECO:0000269" key="4">
    <source ref="1"/>
</evidence>
<evidence type="ECO:0000305" key="5"/>
<sequence>MKNFGLLVVCLSLATLVIPSDGVHIDGDAAPFFVVSQIQHTAGNPAVVGSSYTGRTAVAPPLNMRTNVAVPSTLGINSVNIGTNLPTFYQPTPQPVRSFKNTIDPSLLYSLMAGGLRGDGFLNQLNTIEFSSPAEVIDAVENAVENRADAIKDVIETVSGAVQNGDDEVEGIYDVFAEDDSENPVENLDDSDGVYDVFADAMEKKAEALENAAEAAAEYISDQSEEVDDLSEEVLDDDSDENDSTSSESEVEDSDVDLEVDVGIDLGGDLDLGGGVDLGGGMGMGGALNMNGGLDMGGRYGR</sequence>
<comment type="subcellular location">
    <subcellularLocation>
        <location evidence="3">Secreted</location>
    </subcellularLocation>
</comment>
<comment type="tissue specificity">
    <text evidence="3">Component of the acid-insoluble organic matrix of calcified layers of the shell (at protein level).</text>
</comment>
<name>CCD2_LOTGI</name>
<reference evidence="5" key="1">
    <citation type="submission" date="2007-12" db="EMBL/GenBank/DDBJ databases">
        <title>DOE Joint Genome Institute Lottia gigantea EST project.</title>
        <authorList>
            <person name="Richardson P."/>
            <person name="Lucas S."/>
            <person name="Rokhsar D."/>
            <person name="Wang M."/>
            <person name="Lindquist E.A."/>
        </authorList>
    </citation>
    <scope>NUCLEOTIDE SEQUENCE [LARGE SCALE MRNA]</scope>
    <scope>IDENTIFICATION</scope>
    <source>
        <tissue evidence="4">Mantle</tissue>
    </source>
</reference>
<reference key="2">
    <citation type="journal article" date="2013" name="FEBS J.">
        <title>The shell-forming proteome of Lottia gigantea reveals both deep conservations and lineage-specific novelties.</title>
        <authorList>
            <person name="Marie B."/>
            <person name="Jackson D.J."/>
            <person name="Ramos-Silva P."/>
            <person name="Zanella-Cleon I."/>
            <person name="Guichard N."/>
            <person name="Marin F."/>
        </authorList>
    </citation>
    <scope>PROTEIN SEQUENCE OF 56-65 AND 101-117</scope>
    <scope>SUBCELLULAR LOCATION</scope>
    <scope>TISSUE SPECIFICITY</scope>
    <source>
        <tissue>Shell</tissue>
    </source>
</reference>
<organism>
    <name type="scientific">Lottia gigantea</name>
    <name type="common">Giant owl limpet</name>
    <dbReference type="NCBI Taxonomy" id="225164"/>
    <lineage>
        <taxon>Eukaryota</taxon>
        <taxon>Metazoa</taxon>
        <taxon>Spiralia</taxon>
        <taxon>Lophotrochozoa</taxon>
        <taxon>Mollusca</taxon>
        <taxon>Gastropoda</taxon>
        <taxon>Patellogastropoda</taxon>
        <taxon>Lottioidea</taxon>
        <taxon>Lottiidae</taxon>
        <taxon>Lottia</taxon>
    </lineage>
</organism>
<dbReference type="EMBL" id="FC624053">
    <property type="status" value="NOT_ANNOTATED_CDS"/>
    <property type="molecule type" value="mRNA"/>
</dbReference>
<dbReference type="EMBL" id="FC625182">
    <property type="status" value="NOT_ANNOTATED_CDS"/>
    <property type="molecule type" value="mRNA"/>
</dbReference>
<dbReference type="GO" id="GO:0005576">
    <property type="term" value="C:extracellular region"/>
    <property type="evidence" value="ECO:0007669"/>
    <property type="project" value="UniProtKB-SubCell"/>
</dbReference>
<proteinExistence type="evidence at protein level"/>
<accession>B3A0Q7</accession>
<feature type="signal peptide" evidence="1">
    <location>
        <begin position="1"/>
        <end position="22"/>
    </location>
</feature>
<feature type="chain" id="PRO_0000415244" description="Coiled-coil domain-containing protein 2" evidence="1">
    <location>
        <begin position="23"/>
        <end position="302"/>
    </location>
</feature>
<feature type="region of interest" description="Disordered" evidence="2">
    <location>
        <begin position="221"/>
        <end position="257"/>
    </location>
</feature>
<feature type="coiled-coil region" evidence="1">
    <location>
        <begin position="198"/>
        <end position="234"/>
    </location>
</feature>
<feature type="compositionally biased region" description="Acidic residues" evidence="2">
    <location>
        <begin position="223"/>
        <end position="257"/>
    </location>
</feature>
<feature type="glycosylation site" description="N-linked (GlcNAc...) asparagine" evidence="1">
    <location>
        <position position="242"/>
    </location>
</feature>
<keyword id="KW-0175">Coiled coil</keyword>
<keyword id="KW-0903">Direct protein sequencing</keyword>
<keyword id="KW-0325">Glycoprotein</keyword>
<keyword id="KW-0964">Secreted</keyword>
<keyword id="KW-0732">Signal</keyword>
<protein>
    <recommendedName>
        <fullName>Coiled-coil domain-containing protein 2</fullName>
    </recommendedName>
    <alternativeName>
        <fullName>Uncharacterized shell protein 9</fullName>
        <shortName>LUSP-9</shortName>
    </alternativeName>
</protein>